<accession>Q6NW58</accession>
<accession>Q6JUU0</accession>
<reference key="1">
    <citation type="journal article" date="2006" name="Hum. Mol. Genet.">
        <title>The microtubule-severing protein spastin is essential for axon outgrowth in the zebrafish embryo.</title>
        <authorList>
            <person name="Wood J.D."/>
            <person name="Landers J.A."/>
            <person name="Bingley M."/>
            <person name="McDermott C.J."/>
            <person name="Thomas-McArthur V."/>
            <person name="Gleadall L.J."/>
            <person name="Shaw P.J."/>
            <person name="Cunliffe V.T."/>
        </authorList>
    </citation>
    <scope>NUCLEOTIDE SEQUENCE [MRNA]</scope>
    <scope>FUNCTION</scope>
    <scope>DEVELOPMENTAL STAGE</scope>
    <scope>DISRUPTION PHENOTYPE</scope>
</reference>
<reference key="2">
    <citation type="journal article" date="2013" name="Nature">
        <title>The zebrafish reference genome sequence and its relationship to the human genome.</title>
        <authorList>
            <person name="Howe K."/>
            <person name="Clark M.D."/>
            <person name="Torroja C.F."/>
            <person name="Torrance J."/>
            <person name="Berthelot C."/>
            <person name="Muffato M."/>
            <person name="Collins J.E."/>
            <person name="Humphray S."/>
            <person name="McLaren K."/>
            <person name="Matthews L."/>
            <person name="McLaren S."/>
            <person name="Sealy I."/>
            <person name="Caccamo M."/>
            <person name="Churcher C."/>
            <person name="Scott C."/>
            <person name="Barrett J.C."/>
            <person name="Koch R."/>
            <person name="Rauch G.J."/>
            <person name="White S."/>
            <person name="Chow W."/>
            <person name="Kilian B."/>
            <person name="Quintais L.T."/>
            <person name="Guerra-Assuncao J.A."/>
            <person name="Zhou Y."/>
            <person name="Gu Y."/>
            <person name="Yen J."/>
            <person name="Vogel J.H."/>
            <person name="Eyre T."/>
            <person name="Redmond S."/>
            <person name="Banerjee R."/>
            <person name="Chi J."/>
            <person name="Fu B."/>
            <person name="Langley E."/>
            <person name="Maguire S.F."/>
            <person name="Laird G.K."/>
            <person name="Lloyd D."/>
            <person name="Kenyon E."/>
            <person name="Donaldson S."/>
            <person name="Sehra H."/>
            <person name="Almeida-King J."/>
            <person name="Loveland J."/>
            <person name="Trevanion S."/>
            <person name="Jones M."/>
            <person name="Quail M."/>
            <person name="Willey D."/>
            <person name="Hunt A."/>
            <person name="Burton J."/>
            <person name="Sims S."/>
            <person name="McLay K."/>
            <person name="Plumb B."/>
            <person name="Davis J."/>
            <person name="Clee C."/>
            <person name="Oliver K."/>
            <person name="Clark R."/>
            <person name="Riddle C."/>
            <person name="Elliot D."/>
            <person name="Threadgold G."/>
            <person name="Harden G."/>
            <person name="Ware D."/>
            <person name="Begum S."/>
            <person name="Mortimore B."/>
            <person name="Kerry G."/>
            <person name="Heath P."/>
            <person name="Phillimore B."/>
            <person name="Tracey A."/>
            <person name="Corby N."/>
            <person name="Dunn M."/>
            <person name="Johnson C."/>
            <person name="Wood J."/>
            <person name="Clark S."/>
            <person name="Pelan S."/>
            <person name="Griffiths G."/>
            <person name="Smith M."/>
            <person name="Glithero R."/>
            <person name="Howden P."/>
            <person name="Barker N."/>
            <person name="Lloyd C."/>
            <person name="Stevens C."/>
            <person name="Harley J."/>
            <person name="Holt K."/>
            <person name="Panagiotidis G."/>
            <person name="Lovell J."/>
            <person name="Beasley H."/>
            <person name="Henderson C."/>
            <person name="Gordon D."/>
            <person name="Auger K."/>
            <person name="Wright D."/>
            <person name="Collins J."/>
            <person name="Raisen C."/>
            <person name="Dyer L."/>
            <person name="Leung K."/>
            <person name="Robertson L."/>
            <person name="Ambridge K."/>
            <person name="Leongamornlert D."/>
            <person name="McGuire S."/>
            <person name="Gilderthorp R."/>
            <person name="Griffiths C."/>
            <person name="Manthravadi D."/>
            <person name="Nichol S."/>
            <person name="Barker G."/>
            <person name="Whitehead S."/>
            <person name="Kay M."/>
            <person name="Brown J."/>
            <person name="Murnane C."/>
            <person name="Gray E."/>
            <person name="Humphries M."/>
            <person name="Sycamore N."/>
            <person name="Barker D."/>
            <person name="Saunders D."/>
            <person name="Wallis J."/>
            <person name="Babbage A."/>
            <person name="Hammond S."/>
            <person name="Mashreghi-Mohammadi M."/>
            <person name="Barr L."/>
            <person name="Martin S."/>
            <person name="Wray P."/>
            <person name="Ellington A."/>
            <person name="Matthews N."/>
            <person name="Ellwood M."/>
            <person name="Woodmansey R."/>
            <person name="Clark G."/>
            <person name="Cooper J."/>
            <person name="Tromans A."/>
            <person name="Grafham D."/>
            <person name="Skuce C."/>
            <person name="Pandian R."/>
            <person name="Andrews R."/>
            <person name="Harrison E."/>
            <person name="Kimberley A."/>
            <person name="Garnett J."/>
            <person name="Fosker N."/>
            <person name="Hall R."/>
            <person name="Garner P."/>
            <person name="Kelly D."/>
            <person name="Bird C."/>
            <person name="Palmer S."/>
            <person name="Gehring I."/>
            <person name="Berger A."/>
            <person name="Dooley C.M."/>
            <person name="Ersan-Urun Z."/>
            <person name="Eser C."/>
            <person name="Geiger H."/>
            <person name="Geisler M."/>
            <person name="Karotki L."/>
            <person name="Kirn A."/>
            <person name="Konantz J."/>
            <person name="Konantz M."/>
            <person name="Oberlander M."/>
            <person name="Rudolph-Geiger S."/>
            <person name="Teucke M."/>
            <person name="Lanz C."/>
            <person name="Raddatz G."/>
            <person name="Osoegawa K."/>
            <person name="Zhu B."/>
            <person name="Rapp A."/>
            <person name="Widaa S."/>
            <person name="Langford C."/>
            <person name="Yang F."/>
            <person name="Schuster S.C."/>
            <person name="Carter N.P."/>
            <person name="Harrow J."/>
            <person name="Ning Z."/>
            <person name="Herrero J."/>
            <person name="Searle S.M."/>
            <person name="Enright A."/>
            <person name="Geisler R."/>
            <person name="Plasterk R.H."/>
            <person name="Lee C."/>
            <person name="Westerfield M."/>
            <person name="de Jong P.J."/>
            <person name="Zon L.I."/>
            <person name="Postlethwait J.H."/>
            <person name="Nusslein-Volhard C."/>
            <person name="Hubbard T.J."/>
            <person name="Roest Crollius H."/>
            <person name="Rogers J."/>
            <person name="Stemple D.L."/>
        </authorList>
    </citation>
    <scope>NUCLEOTIDE SEQUENCE [LARGE SCALE GENOMIC DNA]</scope>
    <source>
        <strain>Tuebingen</strain>
    </source>
</reference>
<reference key="3">
    <citation type="submission" date="2004-03" db="EMBL/GenBank/DDBJ databases">
        <authorList>
            <consortium name="NIH - Zebrafish Gene Collection (ZGC) project"/>
        </authorList>
    </citation>
    <scope>NUCLEOTIDE SEQUENCE [LARGE SCALE MRNA]</scope>
    <source>
        <tissue>Embryo</tissue>
    </source>
</reference>
<reference key="4">
    <citation type="journal article" date="2016" name="Hum. Mol. Genet.">
        <title>Conserved pharmacological rescue of hereditary spastic paraplegia-related phenotypes across model organisms.</title>
        <authorList>
            <person name="Julien C."/>
            <person name="Lissouba A."/>
            <person name="Madabattula S."/>
            <person name="Fardghassemi Y."/>
            <person name="Rosenfelt C."/>
            <person name="Androschuk A."/>
            <person name="Strautman J."/>
            <person name="Wong C."/>
            <person name="Bysice A."/>
            <person name="O'sullivan J."/>
            <person name="Rouleau G.A."/>
            <person name="Drapeau P."/>
            <person name="Parker J.A."/>
            <person name="Bolduc F.V."/>
        </authorList>
    </citation>
    <scope>DISRUPTION PHENOTYPE</scope>
</reference>
<dbReference type="EC" id="5.6.1.1" evidence="2"/>
<dbReference type="EMBL" id="AY304504">
    <property type="protein sequence ID" value="AAQ74774.1"/>
    <property type="molecule type" value="mRNA"/>
</dbReference>
<dbReference type="EMBL" id="CU651563">
    <property type="protein sequence ID" value="CAX13091.1"/>
    <property type="molecule type" value="Genomic_DNA"/>
</dbReference>
<dbReference type="EMBL" id="BC067715">
    <property type="protein sequence ID" value="AAH67715.1"/>
    <property type="molecule type" value="mRNA"/>
</dbReference>
<dbReference type="RefSeq" id="NP_998080.2">
    <property type="nucleotide sequence ID" value="NM_212915.2"/>
</dbReference>
<dbReference type="SMR" id="Q6NW58"/>
<dbReference type="FunCoup" id="Q6NW58">
    <property type="interactions" value="1766"/>
</dbReference>
<dbReference type="STRING" id="7955.ENSDARP00000029675"/>
<dbReference type="PaxDb" id="7955-ENSDARP00000029675"/>
<dbReference type="Ensembl" id="ENSDART00000035150">
    <property type="protein sequence ID" value="ENSDARP00000029675"/>
    <property type="gene ID" value="ENSDARG00000024933"/>
</dbReference>
<dbReference type="GeneID" id="405851"/>
<dbReference type="KEGG" id="dre:405851"/>
<dbReference type="AGR" id="ZFIN:ZDB-GENE-040426-2331"/>
<dbReference type="CTD" id="6683"/>
<dbReference type="ZFIN" id="ZDB-GENE-040426-2331">
    <property type="gene designation" value="spast"/>
</dbReference>
<dbReference type="eggNOG" id="KOG0740">
    <property type="taxonomic scope" value="Eukaryota"/>
</dbReference>
<dbReference type="HOGENOM" id="CLU_000688_21_5_1"/>
<dbReference type="InParanoid" id="Q6NW58"/>
<dbReference type="OMA" id="KSREPML"/>
<dbReference type="OrthoDB" id="10251136at2759"/>
<dbReference type="PhylomeDB" id="Q6NW58"/>
<dbReference type="TreeFam" id="TF105014"/>
<dbReference type="BRENDA" id="5.6.1.1">
    <property type="organism ID" value="928"/>
</dbReference>
<dbReference type="Reactome" id="R-DRE-9668328">
    <property type="pathway name" value="Sealing of the nuclear envelope (NE) by ESCRT-III"/>
</dbReference>
<dbReference type="PRO" id="PR:Q6NW58"/>
<dbReference type="Proteomes" id="UP000000437">
    <property type="component" value="Chromosome 1"/>
</dbReference>
<dbReference type="Bgee" id="ENSDARG00000024933">
    <property type="expression patterns" value="Expressed in mature ovarian follicle and 21 other cell types or tissues"/>
</dbReference>
<dbReference type="GO" id="GO:1904115">
    <property type="term" value="C:axon cytoplasm"/>
    <property type="evidence" value="ECO:0007669"/>
    <property type="project" value="GOC"/>
</dbReference>
<dbReference type="GO" id="GO:0005813">
    <property type="term" value="C:centrosome"/>
    <property type="evidence" value="ECO:0007669"/>
    <property type="project" value="UniProtKB-SubCell"/>
</dbReference>
<dbReference type="GO" id="GO:0005874">
    <property type="term" value="C:microtubule"/>
    <property type="evidence" value="ECO:0007669"/>
    <property type="project" value="UniProtKB-UniRule"/>
</dbReference>
<dbReference type="GO" id="GO:0015630">
    <property type="term" value="C:microtubule cytoskeleton"/>
    <property type="evidence" value="ECO:0000318"/>
    <property type="project" value="GO_Central"/>
</dbReference>
<dbReference type="GO" id="GO:0030496">
    <property type="term" value="C:midbody"/>
    <property type="evidence" value="ECO:0000250"/>
    <property type="project" value="UniProtKB"/>
</dbReference>
<dbReference type="GO" id="GO:0031965">
    <property type="term" value="C:nuclear membrane"/>
    <property type="evidence" value="ECO:0000250"/>
    <property type="project" value="UniProtKB"/>
</dbReference>
<dbReference type="GO" id="GO:0005634">
    <property type="term" value="C:nucleus"/>
    <property type="evidence" value="ECO:0000250"/>
    <property type="project" value="UniProtKB"/>
</dbReference>
<dbReference type="GO" id="GO:0048471">
    <property type="term" value="C:perinuclear region of cytoplasm"/>
    <property type="evidence" value="ECO:0007669"/>
    <property type="project" value="UniProtKB-SubCell"/>
</dbReference>
<dbReference type="GO" id="GO:0005819">
    <property type="term" value="C:spindle"/>
    <property type="evidence" value="ECO:0007669"/>
    <property type="project" value="UniProtKB-UniRule"/>
</dbReference>
<dbReference type="GO" id="GO:0043014">
    <property type="term" value="F:alpha-tubulin binding"/>
    <property type="evidence" value="ECO:0000250"/>
    <property type="project" value="UniProtKB"/>
</dbReference>
<dbReference type="GO" id="GO:0005524">
    <property type="term" value="F:ATP binding"/>
    <property type="evidence" value="ECO:0007669"/>
    <property type="project" value="UniProtKB-UniRule"/>
</dbReference>
<dbReference type="GO" id="GO:0016887">
    <property type="term" value="F:ATP hydrolysis activity"/>
    <property type="evidence" value="ECO:0000318"/>
    <property type="project" value="GO_Central"/>
</dbReference>
<dbReference type="GO" id="GO:0048487">
    <property type="term" value="F:beta-tubulin binding"/>
    <property type="evidence" value="ECO:0000250"/>
    <property type="project" value="UniProtKB"/>
</dbReference>
<dbReference type="GO" id="GO:0008017">
    <property type="term" value="F:microtubule binding"/>
    <property type="evidence" value="ECO:0000250"/>
    <property type="project" value="UniProtKB"/>
</dbReference>
<dbReference type="GO" id="GO:0008568">
    <property type="term" value="F:microtubule severing ATPase activity"/>
    <property type="evidence" value="ECO:0000250"/>
    <property type="project" value="UniProtKB"/>
</dbReference>
<dbReference type="GO" id="GO:0008089">
    <property type="term" value="P:anterograde axonal transport"/>
    <property type="evidence" value="ECO:0000250"/>
    <property type="project" value="UniProtKB"/>
</dbReference>
<dbReference type="GO" id="GO:0048675">
    <property type="term" value="P:axon extension"/>
    <property type="evidence" value="ECO:0000315"/>
    <property type="project" value="ZFIN"/>
</dbReference>
<dbReference type="GO" id="GO:0007411">
    <property type="term" value="P:axon guidance"/>
    <property type="evidence" value="ECO:0000315"/>
    <property type="project" value="ZFIN"/>
</dbReference>
<dbReference type="GO" id="GO:0019896">
    <property type="term" value="P:axonal transport of mitochondrion"/>
    <property type="evidence" value="ECO:0000250"/>
    <property type="project" value="UniProtKB"/>
</dbReference>
<dbReference type="GO" id="GO:0007409">
    <property type="term" value="P:axonogenesis"/>
    <property type="evidence" value="ECO:0000315"/>
    <property type="project" value="ZFIN"/>
</dbReference>
<dbReference type="GO" id="GO:0021955">
    <property type="term" value="P:central nervous system neuron axonogenesis"/>
    <property type="evidence" value="ECO:0000315"/>
    <property type="project" value="ZFIN"/>
</dbReference>
<dbReference type="GO" id="GO:0032506">
    <property type="term" value="P:cytokinetic process"/>
    <property type="evidence" value="ECO:0007669"/>
    <property type="project" value="UniProtKB-UniRule"/>
</dbReference>
<dbReference type="GO" id="GO:0031122">
    <property type="term" value="P:cytoplasmic microtubule organization"/>
    <property type="evidence" value="ECO:0000315"/>
    <property type="project" value="ZFIN"/>
</dbReference>
<dbReference type="GO" id="GO:0007029">
    <property type="term" value="P:endoplasmic reticulum organization"/>
    <property type="evidence" value="ECO:0000315"/>
    <property type="project" value="ZFIN"/>
</dbReference>
<dbReference type="GO" id="GO:0006888">
    <property type="term" value="P:endoplasmic reticulum to Golgi vesicle-mediated transport"/>
    <property type="evidence" value="ECO:0007669"/>
    <property type="project" value="UniProtKB-UniRule"/>
</dbReference>
<dbReference type="GO" id="GO:0007032">
    <property type="term" value="P:endosome organization"/>
    <property type="evidence" value="ECO:0000315"/>
    <property type="project" value="ZFIN"/>
</dbReference>
<dbReference type="GO" id="GO:0010458">
    <property type="term" value="P:exit from mitosis"/>
    <property type="evidence" value="ECO:0000250"/>
    <property type="project" value="UniProtKB"/>
</dbReference>
<dbReference type="GO" id="GO:0034389">
    <property type="term" value="P:lipid droplet organization"/>
    <property type="evidence" value="ECO:0000315"/>
    <property type="project" value="ZFIN"/>
</dbReference>
<dbReference type="GO" id="GO:0090148">
    <property type="term" value="P:membrane fission"/>
    <property type="evidence" value="ECO:0000250"/>
    <property type="project" value="UniProtKB"/>
</dbReference>
<dbReference type="GO" id="GO:0001578">
    <property type="term" value="P:microtubule bundle formation"/>
    <property type="evidence" value="ECO:0000250"/>
    <property type="project" value="UniProtKB"/>
</dbReference>
<dbReference type="GO" id="GO:0000226">
    <property type="term" value="P:microtubule cytoskeleton organization"/>
    <property type="evidence" value="ECO:0000315"/>
    <property type="project" value="ZFIN"/>
</dbReference>
<dbReference type="GO" id="GO:0051013">
    <property type="term" value="P:microtubule severing"/>
    <property type="evidence" value="ECO:0000250"/>
    <property type="project" value="UniProtKB"/>
</dbReference>
<dbReference type="GO" id="GO:0000281">
    <property type="term" value="P:mitotic cytokinesis"/>
    <property type="evidence" value="ECO:0000250"/>
    <property type="project" value="UniProtKB"/>
</dbReference>
<dbReference type="GO" id="GO:0051228">
    <property type="term" value="P:mitotic spindle disassembly"/>
    <property type="evidence" value="ECO:0000250"/>
    <property type="project" value="UniProtKB"/>
</dbReference>
<dbReference type="GO" id="GO:0043066">
    <property type="term" value="P:negative regulation of apoptotic process"/>
    <property type="evidence" value="ECO:0000315"/>
    <property type="project" value="ZFIN"/>
</dbReference>
<dbReference type="GO" id="GO:0031468">
    <property type="term" value="P:nuclear membrane reassembly"/>
    <property type="evidence" value="ECO:0000250"/>
    <property type="project" value="UniProtKB"/>
</dbReference>
<dbReference type="GO" id="GO:0045773">
    <property type="term" value="P:positive regulation of axon extension"/>
    <property type="evidence" value="ECO:0000315"/>
    <property type="project" value="ZFIN"/>
</dbReference>
<dbReference type="GO" id="GO:0031117">
    <property type="term" value="P:positive regulation of microtubule depolymerization"/>
    <property type="evidence" value="ECO:0000315"/>
    <property type="project" value="ZFIN"/>
</dbReference>
<dbReference type="GO" id="GO:0034214">
    <property type="term" value="P:protein hexamerization"/>
    <property type="evidence" value="ECO:0000250"/>
    <property type="project" value="UniProtKB"/>
</dbReference>
<dbReference type="GO" id="GO:0051260">
    <property type="term" value="P:protein homooligomerization"/>
    <property type="evidence" value="ECO:0000250"/>
    <property type="project" value="UniProtKB"/>
</dbReference>
<dbReference type="GO" id="GO:0072593">
    <property type="term" value="P:reactive oxygen species metabolic process"/>
    <property type="evidence" value="ECO:0000315"/>
    <property type="project" value="ZFIN"/>
</dbReference>
<dbReference type="GO" id="GO:0048741">
    <property type="term" value="P:skeletal muscle fiber development"/>
    <property type="evidence" value="ECO:0000315"/>
    <property type="project" value="ZFIN"/>
</dbReference>
<dbReference type="CDD" id="cd02679">
    <property type="entry name" value="MIT_spastin"/>
    <property type="match status" value="1"/>
</dbReference>
<dbReference type="CDD" id="cd19524">
    <property type="entry name" value="RecA-like_spastin"/>
    <property type="match status" value="1"/>
</dbReference>
<dbReference type="FunFam" id="3.40.50.300:FF:000093">
    <property type="entry name" value="Fidgetin-like 1"/>
    <property type="match status" value="1"/>
</dbReference>
<dbReference type="FunFam" id="1.10.8.60:FF:000036">
    <property type="entry name" value="Spastin"/>
    <property type="match status" value="1"/>
</dbReference>
<dbReference type="FunFam" id="1.20.58.80:FF:000006">
    <property type="entry name" value="Spastin"/>
    <property type="match status" value="1"/>
</dbReference>
<dbReference type="Gene3D" id="1.10.8.60">
    <property type="match status" value="1"/>
</dbReference>
<dbReference type="Gene3D" id="3.40.50.300">
    <property type="entry name" value="P-loop containing nucleotide triphosphate hydrolases"/>
    <property type="match status" value="1"/>
</dbReference>
<dbReference type="Gene3D" id="1.20.58.80">
    <property type="entry name" value="Phosphotransferase system, lactose/cellobiose-type IIA subunit"/>
    <property type="match status" value="1"/>
</dbReference>
<dbReference type="HAMAP" id="MF_03021">
    <property type="entry name" value="Spastin"/>
    <property type="match status" value="1"/>
</dbReference>
<dbReference type="InterPro" id="IPR003593">
    <property type="entry name" value="AAA+_ATPase"/>
</dbReference>
<dbReference type="InterPro" id="IPR041569">
    <property type="entry name" value="AAA_lid_3"/>
</dbReference>
<dbReference type="InterPro" id="IPR003959">
    <property type="entry name" value="ATPase_AAA_core"/>
</dbReference>
<dbReference type="InterPro" id="IPR003960">
    <property type="entry name" value="ATPase_AAA_CS"/>
</dbReference>
<dbReference type="InterPro" id="IPR007330">
    <property type="entry name" value="MIT_dom"/>
</dbReference>
<dbReference type="InterPro" id="IPR050304">
    <property type="entry name" value="MT-severing_AAA_ATPase"/>
</dbReference>
<dbReference type="InterPro" id="IPR027417">
    <property type="entry name" value="P-loop_NTPase"/>
</dbReference>
<dbReference type="InterPro" id="IPR015415">
    <property type="entry name" value="Spast_Vps4_C"/>
</dbReference>
<dbReference type="InterPro" id="IPR017179">
    <property type="entry name" value="Spastin"/>
</dbReference>
<dbReference type="InterPro" id="IPR035106">
    <property type="entry name" value="Spastin_chordate"/>
</dbReference>
<dbReference type="PANTHER" id="PTHR23074">
    <property type="entry name" value="AAA DOMAIN-CONTAINING"/>
    <property type="match status" value="1"/>
</dbReference>
<dbReference type="PANTHER" id="PTHR23074:SF86">
    <property type="entry name" value="SPASTIN"/>
    <property type="match status" value="1"/>
</dbReference>
<dbReference type="Pfam" id="PF00004">
    <property type="entry name" value="AAA"/>
    <property type="match status" value="1"/>
</dbReference>
<dbReference type="Pfam" id="PF17862">
    <property type="entry name" value="AAA_lid_3"/>
    <property type="match status" value="1"/>
</dbReference>
<dbReference type="Pfam" id="PF09336">
    <property type="entry name" value="Vps4_C"/>
    <property type="match status" value="1"/>
</dbReference>
<dbReference type="PIRSF" id="PIRSF037338">
    <property type="entry name" value="Spastin"/>
    <property type="match status" value="1"/>
</dbReference>
<dbReference type="SMART" id="SM00382">
    <property type="entry name" value="AAA"/>
    <property type="match status" value="1"/>
</dbReference>
<dbReference type="SMART" id="SM00745">
    <property type="entry name" value="MIT"/>
    <property type="match status" value="1"/>
</dbReference>
<dbReference type="SUPFAM" id="SSF52540">
    <property type="entry name" value="P-loop containing nucleoside triphosphate hydrolases"/>
    <property type="match status" value="1"/>
</dbReference>
<dbReference type="PROSITE" id="PS00674">
    <property type="entry name" value="AAA"/>
    <property type="match status" value="1"/>
</dbReference>
<organism>
    <name type="scientific">Danio rerio</name>
    <name type="common">Zebrafish</name>
    <name type="synonym">Brachydanio rerio</name>
    <dbReference type="NCBI Taxonomy" id="7955"/>
    <lineage>
        <taxon>Eukaryota</taxon>
        <taxon>Metazoa</taxon>
        <taxon>Chordata</taxon>
        <taxon>Craniata</taxon>
        <taxon>Vertebrata</taxon>
        <taxon>Euteleostomi</taxon>
        <taxon>Actinopterygii</taxon>
        <taxon>Neopterygii</taxon>
        <taxon>Teleostei</taxon>
        <taxon>Ostariophysi</taxon>
        <taxon>Cypriniformes</taxon>
        <taxon>Danionidae</taxon>
        <taxon>Danioninae</taxon>
        <taxon>Danio</taxon>
    </lineage>
</organism>
<feature type="chain" id="PRO_0000367137" description="Spastin">
    <location>
        <begin position="1"/>
        <end position="570"/>
    </location>
</feature>
<feature type="topological domain" description="Cytoplasmic" evidence="2">
    <location>
        <begin position="1"/>
        <end position="35"/>
    </location>
</feature>
<feature type="intramembrane region" description="Helical" evidence="2">
    <location>
        <begin position="36"/>
        <end position="52"/>
    </location>
</feature>
<feature type="topological domain" description="Cytoplasmic" evidence="2">
    <location>
        <begin position="53"/>
        <end position="570"/>
    </location>
</feature>
<feature type="domain" description="MIT" evidence="1">
    <location>
        <begin position="83"/>
        <end position="158"/>
    </location>
</feature>
<feature type="region of interest" description="Disordered" evidence="3">
    <location>
        <begin position="186"/>
        <end position="269"/>
    </location>
</feature>
<feature type="compositionally biased region" description="Polar residues" evidence="3">
    <location>
        <begin position="199"/>
        <end position="208"/>
    </location>
</feature>
<feature type="compositionally biased region" description="Polar residues" evidence="3">
    <location>
        <begin position="216"/>
        <end position="242"/>
    </location>
</feature>
<feature type="compositionally biased region" description="Polar residues" evidence="3">
    <location>
        <begin position="251"/>
        <end position="261"/>
    </location>
</feature>
<feature type="binding site" evidence="2">
    <location>
        <begin position="335"/>
        <end position="342"/>
    </location>
    <ligand>
        <name>ATP</name>
        <dbReference type="ChEBI" id="CHEBI:30616"/>
    </ligand>
</feature>
<feature type="sequence conflict" description="In Ref. 3; AAH67715." evidence="6" ref="3">
    <original>C</original>
    <variation>R</variation>
    <location>
        <position position="224"/>
    </location>
</feature>
<sequence>MNSGHKARLRGGRACGPVSDGSARGNRLLFYTRSLSRVPEWLLRVLLLLLRWLFQPIRRAMAARAKECGPDGSEETGERIRNYHKQAFEFISVALQIDEDEKGDKQKAVQWYRKGIAELEKGIQIQVTGAGEKADRARKLQDKMITNLSMAEDRLKLLGNLLSQSPAESSSDDSFYSFSNGNLRPAPASGAVSKKKDTLTITNQTSLRPKNPPKSTPNASGLNCTPSAAQSSRTGPQNNQKGPTVKGKNNVKASTTATASPQRKRDMKNFKNVDSKLASLILNEIVDSGSVVRFDDIAGQDLAKQALQEIVILPALRPELFTGLRAPARGLLLFGPPGNGKTMLAKAVAMESNATFFNISAATLTSKYVGEGEKLVRALFAVARELQPSIIFIDEIDSLLCERREGEHDASRRLKTEFLIEFDGVQSGGDERVLVMGATNRPQELDEAVLRRFAKRIYVALPTEETRLKLLKNLLSKHRNPLSQKELSQLARLTDGYSGSDLTSLAKDAALGPIRELKPEQVRNMSAHEMRDIRISDFLESLKRIKRSVSPQTLDQYVRWNREYGDTTGV</sequence>
<evidence type="ECO:0000255" key="1"/>
<evidence type="ECO:0000255" key="2">
    <source>
        <dbReference type="HAMAP-Rule" id="MF_03021"/>
    </source>
</evidence>
<evidence type="ECO:0000256" key="3">
    <source>
        <dbReference type="SAM" id="MobiDB-lite"/>
    </source>
</evidence>
<evidence type="ECO:0000269" key="4">
    <source>
    </source>
</evidence>
<evidence type="ECO:0000269" key="5">
    <source>
    </source>
</evidence>
<evidence type="ECO:0000305" key="6"/>
<keyword id="KW-0067">ATP-binding</keyword>
<keyword id="KW-0131">Cell cycle</keyword>
<keyword id="KW-0132">Cell division</keyword>
<keyword id="KW-0963">Cytoplasm</keyword>
<keyword id="KW-0206">Cytoskeleton</keyword>
<keyword id="KW-0217">Developmental protein</keyword>
<keyword id="KW-0221">Differentiation</keyword>
<keyword id="KW-0413">Isomerase</keyword>
<keyword id="KW-0472">Membrane</keyword>
<keyword id="KW-0493">Microtubule</keyword>
<keyword id="KW-0524">Neurogenesis</keyword>
<keyword id="KW-0547">Nucleotide-binding</keyword>
<keyword id="KW-0539">Nucleus</keyword>
<keyword id="KW-1185">Reference proteome</keyword>
<protein>
    <recommendedName>
        <fullName evidence="2">Spastin</fullName>
        <ecNumber evidence="2">5.6.1.1</ecNumber>
    </recommendedName>
</protein>
<proteinExistence type="evidence at transcript level"/>
<name>SPAST_DANRE</name>
<comment type="function">
    <text evidence="2">ATP-dependent microtubule severing protein that specifically recognizes and cuts microtubules that are polyglutamylated. Preferentially recognizes and acts on microtubules decorated with short polyglutamate tails: severing activity increases as the number of glutamates per tubulin rises from one to eight, but decreases beyond this glutamylation threshold. Microtubule severing promotes reorganization of cellular microtubule arrays and the release of microtubules from the centrosome following nucleation. Required for membrane traffic from the endoplasmic reticulum (ER) to the Golgi and for completion of the abscission stage of cytokinesis. Also plays a role in axon growth and the formation of axonal branches.</text>
</comment>
<comment type="catalytic activity">
    <reaction evidence="2">
        <text>n ATP + n H2O + a microtubule = n ADP + n phosphate + (n+1) alpha/beta tubulin heterodimers.</text>
        <dbReference type="EC" id="5.6.1.1"/>
    </reaction>
</comment>
<comment type="subunit">
    <text evidence="2">Homohexamer. The homohexamer is stabilized by ATP-binding. The homohexamer may adopt a ring conformation through which microtubules pass prior to being severed. Interacts with microtubules.</text>
</comment>
<comment type="subcellular location">
    <subcellularLocation>
        <location evidence="2">Membrane</location>
        <topology evidence="2">Peripheral membrane protein</topology>
    </subcellularLocation>
    <subcellularLocation>
        <location evidence="2">Cytoplasm</location>
        <location evidence="2">Cytoskeleton</location>
        <location evidence="2">Microtubule organizing center</location>
        <location evidence="2">Centrosome</location>
    </subcellularLocation>
    <subcellularLocation>
        <location evidence="2">Cytoplasm</location>
        <location evidence="2">Cytoskeleton</location>
    </subcellularLocation>
    <subcellularLocation>
        <location evidence="2">Cytoplasm</location>
        <location evidence="2">Perinuclear region</location>
    </subcellularLocation>
    <subcellularLocation>
        <location evidence="2">Nucleus</location>
    </subcellularLocation>
    <text evidence="2">Forms an intramembrane hairpin-like structure in the membrane.</text>
</comment>
<comment type="developmental stage">
    <text evidence="4">Maternally expressed. Expressed at low levels throughout the embryo up to 24 hours post-fertilization (hpf).</text>
</comment>
<comment type="disruption phenotype">
    <text evidence="4 5">Branchiomotor neurons exhibit reduced axonal outgrowth and aberrant positioning of neuronal cell bodies. Outgrowth of motor axons from the spinal cord is impaired, the number and length of spinal motor neurons is reduced, and elevated levels of apoptosis are observed in the CNS. Thickened bundles of axonal microtubules are observed in the spinal cord. Longitudinal fascicles in the hindbrain are disordered. Most embryos are immotile and fail to hatch, while those that do exhibit reduced motility and swimming defects. Morpholino knockdown results in abnormal morphological features, including hydrocephalia, perturbed yolk sac extension and an arched-back phenotype, disorganized microtubule networks in the spinal cord and thinner microtubules in the spinal motor neuron axons, and in increased oxidative stress (PubMed:26744324). These phenotypes are rescued following exposure to the drugs methylene blue, guanabenz, salubrinal or phenazine (PubMed:26744324).</text>
</comment>
<comment type="similarity">
    <text evidence="2">Belongs to the AAA ATPase family. Spastin subfamily.</text>
</comment>
<gene>
    <name evidence="2" type="primary">spast</name>
    <name evidence="2" type="synonym">spg4</name>
    <name type="ORF">si:ch73-233a22.3</name>
    <name type="ORF">zgc:85952</name>
</gene>